<name>ALDH5_BACSU</name>
<keyword id="KW-0520">NAD</keyword>
<keyword id="KW-0560">Oxidoreductase</keyword>
<keyword id="KW-1185">Reference proteome</keyword>
<reference key="1">
    <citation type="journal article" date="1997" name="Microbiology">
        <title>A 23.4 kb segment at the 69 degrees-70 degrees region of the Bacillus subtilis genome.</title>
        <authorList>
            <person name="Yamamoto H."/>
            <person name="Uchiyama S."/>
            <person name="Nugroho F.A."/>
            <person name="Sekiguchi J."/>
        </authorList>
    </citation>
    <scope>NUCLEOTIDE SEQUENCE [GENOMIC DNA]</scope>
    <source>
        <strain>168 / AC327</strain>
    </source>
</reference>
<reference key="2">
    <citation type="journal article" date="1997" name="Nature">
        <title>The complete genome sequence of the Gram-positive bacterium Bacillus subtilis.</title>
        <authorList>
            <person name="Kunst F."/>
            <person name="Ogasawara N."/>
            <person name="Moszer I."/>
            <person name="Albertini A.M."/>
            <person name="Alloni G."/>
            <person name="Azevedo V."/>
            <person name="Bertero M.G."/>
            <person name="Bessieres P."/>
            <person name="Bolotin A."/>
            <person name="Borchert S."/>
            <person name="Borriss R."/>
            <person name="Boursier L."/>
            <person name="Brans A."/>
            <person name="Braun M."/>
            <person name="Brignell S.C."/>
            <person name="Bron S."/>
            <person name="Brouillet S."/>
            <person name="Bruschi C.V."/>
            <person name="Caldwell B."/>
            <person name="Capuano V."/>
            <person name="Carter N.M."/>
            <person name="Choi S.-K."/>
            <person name="Codani J.-J."/>
            <person name="Connerton I.F."/>
            <person name="Cummings N.J."/>
            <person name="Daniel R.A."/>
            <person name="Denizot F."/>
            <person name="Devine K.M."/>
            <person name="Duesterhoeft A."/>
            <person name="Ehrlich S.D."/>
            <person name="Emmerson P.T."/>
            <person name="Entian K.-D."/>
            <person name="Errington J."/>
            <person name="Fabret C."/>
            <person name="Ferrari E."/>
            <person name="Foulger D."/>
            <person name="Fritz C."/>
            <person name="Fujita M."/>
            <person name="Fujita Y."/>
            <person name="Fuma S."/>
            <person name="Galizzi A."/>
            <person name="Galleron N."/>
            <person name="Ghim S.-Y."/>
            <person name="Glaser P."/>
            <person name="Goffeau A."/>
            <person name="Golightly E.J."/>
            <person name="Grandi G."/>
            <person name="Guiseppi G."/>
            <person name="Guy B.J."/>
            <person name="Haga K."/>
            <person name="Haiech J."/>
            <person name="Harwood C.R."/>
            <person name="Henaut A."/>
            <person name="Hilbert H."/>
            <person name="Holsappel S."/>
            <person name="Hosono S."/>
            <person name="Hullo M.-F."/>
            <person name="Itaya M."/>
            <person name="Jones L.-M."/>
            <person name="Joris B."/>
            <person name="Karamata D."/>
            <person name="Kasahara Y."/>
            <person name="Klaerr-Blanchard M."/>
            <person name="Klein C."/>
            <person name="Kobayashi Y."/>
            <person name="Koetter P."/>
            <person name="Koningstein G."/>
            <person name="Krogh S."/>
            <person name="Kumano M."/>
            <person name="Kurita K."/>
            <person name="Lapidus A."/>
            <person name="Lardinois S."/>
            <person name="Lauber J."/>
            <person name="Lazarevic V."/>
            <person name="Lee S.-M."/>
            <person name="Levine A."/>
            <person name="Liu H."/>
            <person name="Masuda S."/>
            <person name="Mauel C."/>
            <person name="Medigue C."/>
            <person name="Medina N."/>
            <person name="Mellado R.P."/>
            <person name="Mizuno M."/>
            <person name="Moestl D."/>
            <person name="Nakai S."/>
            <person name="Noback M."/>
            <person name="Noone D."/>
            <person name="O'Reilly M."/>
            <person name="Ogawa K."/>
            <person name="Ogiwara A."/>
            <person name="Oudega B."/>
            <person name="Park S.-H."/>
            <person name="Parro V."/>
            <person name="Pohl T.M."/>
            <person name="Portetelle D."/>
            <person name="Porwollik S."/>
            <person name="Prescott A.M."/>
            <person name="Presecan E."/>
            <person name="Pujic P."/>
            <person name="Purnelle B."/>
            <person name="Rapoport G."/>
            <person name="Rey M."/>
            <person name="Reynolds S."/>
            <person name="Rieger M."/>
            <person name="Rivolta C."/>
            <person name="Rocha E."/>
            <person name="Roche B."/>
            <person name="Rose M."/>
            <person name="Sadaie Y."/>
            <person name="Sato T."/>
            <person name="Scanlan E."/>
            <person name="Schleich S."/>
            <person name="Schroeter R."/>
            <person name="Scoffone F."/>
            <person name="Sekiguchi J."/>
            <person name="Sekowska A."/>
            <person name="Seror S.J."/>
            <person name="Serror P."/>
            <person name="Shin B.-S."/>
            <person name="Soldo B."/>
            <person name="Sorokin A."/>
            <person name="Tacconi E."/>
            <person name="Takagi T."/>
            <person name="Takahashi H."/>
            <person name="Takemaru K."/>
            <person name="Takeuchi M."/>
            <person name="Tamakoshi A."/>
            <person name="Tanaka T."/>
            <person name="Terpstra P."/>
            <person name="Tognoni A."/>
            <person name="Tosato V."/>
            <person name="Uchiyama S."/>
            <person name="Vandenbol M."/>
            <person name="Vannier F."/>
            <person name="Vassarotti A."/>
            <person name="Viari A."/>
            <person name="Wambutt R."/>
            <person name="Wedler E."/>
            <person name="Wedler H."/>
            <person name="Weitzenegger T."/>
            <person name="Winters P."/>
            <person name="Wipat A."/>
            <person name="Yamamoto H."/>
            <person name="Yamane K."/>
            <person name="Yasumoto K."/>
            <person name="Yata K."/>
            <person name="Yoshida K."/>
            <person name="Yoshikawa H.-F."/>
            <person name="Zumstein E."/>
            <person name="Yoshikawa H."/>
            <person name="Danchin A."/>
        </authorList>
    </citation>
    <scope>NUCLEOTIDE SEQUENCE [LARGE SCALE GENOMIC DNA]</scope>
    <source>
        <strain>168</strain>
    </source>
</reference>
<reference key="3">
    <citation type="journal article" date="2004" name="Gene">
        <title>Systematic analysis of SigD-regulated genes in Bacillus subtilis by DNA microarray and Northern blotting analyses.</title>
        <authorList>
            <person name="Serizawa M."/>
            <person name="Yamamoto H."/>
            <person name="Yamaguchi H."/>
            <person name="Fujita Y."/>
            <person name="Kobayashi K."/>
            <person name="Ogasawara N."/>
            <person name="Sekiguchi J."/>
        </authorList>
    </citation>
    <scope>INDUCTION</scope>
    <scope>OPERON STRUCTURE</scope>
    <source>
        <strain>168</strain>
    </source>
</reference>
<reference key="4">
    <citation type="journal article" date="2016" name="Appl. Microbiol. Biotechnol.">
        <title>Identification and characterization of the vanillin dehydrogenase YfmT in Bacillus subtilis 3NA.</title>
        <authorList>
            <person name="Graf N."/>
            <person name="Wenzel M."/>
            <person name="Altenbuchner J."/>
        </authorList>
    </citation>
    <scope>FUNCTION</scope>
    <scope>CATALYTIC ACTIVITY</scope>
    <scope>SUBSTRATE SPECIFICITY</scope>
    <scope>BIOPHYSICOCHEMICAL PROPERTIES</scope>
    <scope>DISRUPTION PHENOTYPE</scope>
    <source>
        <strain>168 / 3NA</strain>
    </source>
</reference>
<feature type="chain" id="PRO_0000379510" description="Benzaldehyde dehydrogenase YfmT">
    <location>
        <begin position="1"/>
        <end position="485"/>
    </location>
</feature>
<feature type="active site" evidence="2">
    <location>
        <position position="253"/>
    </location>
</feature>
<feature type="active site" evidence="2">
    <location>
        <position position="287"/>
    </location>
</feature>
<feature type="binding site" evidence="1">
    <location>
        <begin position="231"/>
        <end position="236"/>
    </location>
    <ligand>
        <name>NAD(+)</name>
        <dbReference type="ChEBI" id="CHEBI:57540"/>
    </ligand>
</feature>
<proteinExistence type="evidence at protein level"/>
<accession>O06478</accession>
<accession>Q797A6</accession>
<dbReference type="EC" id="1.2.1.28" evidence="4"/>
<dbReference type="EC" id="1.2.1.67" evidence="4"/>
<dbReference type="EMBL" id="D86418">
    <property type="protein sequence ID" value="BAA20109.1"/>
    <property type="molecule type" value="Genomic_DNA"/>
</dbReference>
<dbReference type="EMBL" id="AL009126">
    <property type="protein sequence ID" value="CAB12554.1"/>
    <property type="molecule type" value="Genomic_DNA"/>
</dbReference>
<dbReference type="PIR" id="C69814">
    <property type="entry name" value="C69814"/>
</dbReference>
<dbReference type="RefSeq" id="WP_003244104.1">
    <property type="nucleotide sequence ID" value="NZ_OZ025638.1"/>
</dbReference>
<dbReference type="SMR" id="O06478"/>
<dbReference type="FunCoup" id="O06478">
    <property type="interactions" value="72"/>
</dbReference>
<dbReference type="IntAct" id="O06478">
    <property type="interactions" value="1"/>
</dbReference>
<dbReference type="MINT" id="O06478"/>
<dbReference type="STRING" id="224308.BSU07350"/>
<dbReference type="jPOST" id="O06478"/>
<dbReference type="PaxDb" id="224308-BSU07350"/>
<dbReference type="EnsemblBacteria" id="CAB12554">
    <property type="protein sequence ID" value="CAB12554"/>
    <property type="gene ID" value="BSU_07350"/>
</dbReference>
<dbReference type="GeneID" id="938788"/>
<dbReference type="KEGG" id="bsu:BSU07350"/>
<dbReference type="PATRIC" id="fig|224308.179.peg.797"/>
<dbReference type="eggNOG" id="COG1012">
    <property type="taxonomic scope" value="Bacteria"/>
</dbReference>
<dbReference type="InParanoid" id="O06478"/>
<dbReference type="OrthoDB" id="9762913at2"/>
<dbReference type="PhylomeDB" id="O06478"/>
<dbReference type="BioCyc" id="BSUB:BSU07350-MONOMER"/>
<dbReference type="Proteomes" id="UP000001570">
    <property type="component" value="Chromosome"/>
</dbReference>
<dbReference type="GO" id="GO:0018479">
    <property type="term" value="F:benzaldehyde dehydrogenase (NAD+) activity"/>
    <property type="evidence" value="ECO:0000314"/>
    <property type="project" value="UniProtKB"/>
</dbReference>
<dbReference type="GO" id="GO:0050608">
    <property type="term" value="F:vanillin dehydrogenase activity"/>
    <property type="evidence" value="ECO:0007669"/>
    <property type="project" value="UniProtKB-EC"/>
</dbReference>
<dbReference type="CDD" id="cd07151">
    <property type="entry name" value="ALDH_HBenzADH"/>
    <property type="match status" value="1"/>
</dbReference>
<dbReference type="FunFam" id="3.40.309.10:FF:000009">
    <property type="entry name" value="Aldehyde dehydrogenase A"/>
    <property type="match status" value="1"/>
</dbReference>
<dbReference type="Gene3D" id="3.40.605.10">
    <property type="entry name" value="Aldehyde Dehydrogenase, Chain A, domain 1"/>
    <property type="match status" value="1"/>
</dbReference>
<dbReference type="Gene3D" id="3.40.309.10">
    <property type="entry name" value="Aldehyde Dehydrogenase, Chain A, domain 2"/>
    <property type="match status" value="1"/>
</dbReference>
<dbReference type="InterPro" id="IPR016161">
    <property type="entry name" value="Ald_DH/histidinol_DH"/>
</dbReference>
<dbReference type="InterPro" id="IPR016163">
    <property type="entry name" value="Ald_DH_C"/>
</dbReference>
<dbReference type="InterPro" id="IPR029510">
    <property type="entry name" value="Ald_DH_CS_GLU"/>
</dbReference>
<dbReference type="InterPro" id="IPR016162">
    <property type="entry name" value="Ald_DH_N"/>
</dbReference>
<dbReference type="InterPro" id="IPR015590">
    <property type="entry name" value="Aldehyde_DH_dom"/>
</dbReference>
<dbReference type="PANTHER" id="PTHR42986">
    <property type="entry name" value="BENZALDEHYDE DEHYDROGENASE YFMT"/>
    <property type="match status" value="1"/>
</dbReference>
<dbReference type="PANTHER" id="PTHR42986:SF1">
    <property type="entry name" value="BENZALDEHYDE DEHYDROGENASE YFMT"/>
    <property type="match status" value="1"/>
</dbReference>
<dbReference type="Pfam" id="PF00171">
    <property type="entry name" value="Aldedh"/>
    <property type="match status" value="1"/>
</dbReference>
<dbReference type="SUPFAM" id="SSF53720">
    <property type="entry name" value="ALDH-like"/>
    <property type="match status" value="1"/>
</dbReference>
<dbReference type="PROSITE" id="PS00687">
    <property type="entry name" value="ALDEHYDE_DEHYDR_GLU"/>
    <property type="match status" value="1"/>
</dbReference>
<evidence type="ECO:0000250" key="1"/>
<evidence type="ECO:0000255" key="2">
    <source>
        <dbReference type="PROSITE-ProRule" id="PRU10007"/>
    </source>
</evidence>
<evidence type="ECO:0000269" key="3">
    <source>
    </source>
</evidence>
<evidence type="ECO:0000269" key="4">
    <source>
    </source>
</evidence>
<evidence type="ECO:0000303" key="5">
    <source>
    </source>
</evidence>
<evidence type="ECO:0000305" key="6"/>
<evidence type="ECO:0000305" key="7">
    <source>
    </source>
</evidence>
<protein>
    <recommendedName>
        <fullName evidence="2 7">Benzaldehyde dehydrogenase YfmT</fullName>
        <ecNumber evidence="4">1.2.1.28</ecNumber>
    </recommendedName>
    <alternativeName>
        <fullName evidence="5">Vanillin dehydrogenase</fullName>
        <ecNumber evidence="4">1.2.1.67</ecNumber>
    </alternativeName>
</protein>
<comment type="function">
    <text evidence="4">A benzaldehyde dehydrogenase able to act on substrates with 3- and 4-hydroxy and methoxy substitutions; converts vanillin (4-hydroxy-3-methoxybenzaldehyde) to vanillic acid in vitro (PubMed:26658822). The physiological substrate is unknown (PubMed:26658822).</text>
</comment>
<comment type="catalytic activity">
    <reaction evidence="4">
        <text>benzaldehyde + NAD(+) + H2O = benzoate + NADH + 2 H(+)</text>
        <dbReference type="Rhea" id="RHEA:11840"/>
        <dbReference type="ChEBI" id="CHEBI:15377"/>
        <dbReference type="ChEBI" id="CHEBI:15378"/>
        <dbReference type="ChEBI" id="CHEBI:16150"/>
        <dbReference type="ChEBI" id="CHEBI:17169"/>
        <dbReference type="ChEBI" id="CHEBI:57540"/>
        <dbReference type="ChEBI" id="CHEBI:57945"/>
        <dbReference type="EC" id="1.2.1.28"/>
    </reaction>
</comment>
<comment type="catalytic activity">
    <reaction evidence="4">
        <text>vanillin + NAD(+) + H2O = vanillate + NADH + 2 H(+)</text>
        <dbReference type="Rhea" id="RHEA:13309"/>
        <dbReference type="ChEBI" id="CHEBI:15377"/>
        <dbReference type="ChEBI" id="CHEBI:15378"/>
        <dbReference type="ChEBI" id="CHEBI:16632"/>
        <dbReference type="ChEBI" id="CHEBI:18346"/>
        <dbReference type="ChEBI" id="CHEBI:57540"/>
        <dbReference type="ChEBI" id="CHEBI:57945"/>
        <dbReference type="EC" id="1.2.1.67"/>
    </reaction>
</comment>
<comment type="biophysicochemical properties">
    <phDependence>
        <text evidence="4">Optimum pH is 7.0.</text>
    </phDependence>
    <temperatureDependence>
        <text evidence="4">Optimum temperature is 37-40 degrees Celsius.</text>
    </temperatureDependence>
</comment>
<comment type="induction">
    <text evidence="3">Transcriptionally regulated by SigD; part of the yfmT/yfmS operon.</text>
</comment>
<comment type="disruption phenotype">
    <text evidence="4">Loss of conversion of vanillin to vanillic acid (PubMed:26658822).</text>
</comment>
<comment type="similarity">
    <text evidence="6">Belongs to the aldehyde dehydrogenase family.</text>
</comment>
<gene>
    <name type="primary">yfmT</name>
    <name type="ordered locus">BSU07350</name>
</gene>
<organism>
    <name type="scientific">Bacillus subtilis (strain 168)</name>
    <dbReference type="NCBI Taxonomy" id="224308"/>
    <lineage>
        <taxon>Bacteria</taxon>
        <taxon>Bacillati</taxon>
        <taxon>Bacillota</taxon>
        <taxon>Bacilli</taxon>
        <taxon>Bacillales</taxon>
        <taxon>Bacillaceae</taxon>
        <taxon>Bacillus</taxon>
    </lineage>
</organism>
<sequence length="485" mass="53321">MFQYEELNKQFIGGKWQEGSSPNVLENKNPYTQKTFTTFRKATADDVDEAYRAAALAKKKWDAVNPFEKRTILEKAVTYIEENEEAIIYLIMEELGGTRLKAAFEIGLVKNIIKEAATFPIRMEGKILPSTIDGKENRLYRVPAGVVGVISPFNFPFFLSMKSVAPALGAGNGVVLKPHEETPICGGTLIAKIFENAGIPAGLLNVVVTDIAEIGDSFVEHPVPRIISFTGSTKVGSYIGQLAMKHFKKPLLELGGNSAFIVLEDADIEYAVNAAVFSRFTHQGQICMSANRVLVHSSIYDKFLELYQAKVESLKVGDPMDPDTIIGPLINSRQTDGLMKTVEQAIEEGAVPVKLGGFNGTIVEPTILKDVKPFMSIAKEELFGPVVSFMKFDSEDEAVDIANETPFGLSGAVHTSNLERGVAFAKRIETGMIHVNDTTINDEPNVAFGGEKQSGLGRLNGEWSLEEFTTLKWISVQHEKRSFPY</sequence>